<keyword id="KW-0325">Glycoprotein</keyword>
<keyword id="KW-1185">Reference proteome</keyword>
<keyword id="KW-0964">Secreted</keyword>
<keyword id="KW-0732">Signal</keyword>
<comment type="subcellular location">
    <subcellularLocation>
        <location evidence="3">Secreted</location>
    </subcellularLocation>
</comment>
<comment type="similarity">
    <text evidence="3">Belongs to the pancreatic ribonuclease family.</text>
</comment>
<comment type="caution">
    <text evidence="3">In contrast to other members of the family, lacks the conserved His active site in position 75, suggesting it is inactive.</text>
</comment>
<gene>
    <name type="primary">Rnase11</name>
</gene>
<dbReference type="EMBL" id="AY665823">
    <property type="protein sequence ID" value="AAV87190.1"/>
    <property type="molecule type" value="Genomic_DNA"/>
</dbReference>
<dbReference type="EMBL" id="AC136376">
    <property type="status" value="NOT_ANNOTATED_CDS"/>
    <property type="molecule type" value="Genomic_DNA"/>
</dbReference>
<dbReference type="EMBL" id="BC141252">
    <property type="protein sequence ID" value="AAI41253.1"/>
    <property type="molecule type" value="mRNA"/>
</dbReference>
<dbReference type="CCDS" id="CCDS27031.1"/>
<dbReference type="RefSeq" id="NP_001011877.1">
    <property type="nucleotide sequence ID" value="NM_001011877.2"/>
</dbReference>
<dbReference type="RefSeq" id="XP_006519283.1">
    <property type="nucleotide sequence ID" value="XM_006519220.2"/>
</dbReference>
<dbReference type="RefSeq" id="XP_011243414.1">
    <property type="nucleotide sequence ID" value="XM_011245112.2"/>
</dbReference>
<dbReference type="FunCoup" id="Q5GAM9">
    <property type="interactions" value="1"/>
</dbReference>
<dbReference type="STRING" id="10090.ENSMUSP00000075472"/>
<dbReference type="GlyCosmos" id="Q5GAM9">
    <property type="glycosylation" value="2 sites, No reported glycans"/>
</dbReference>
<dbReference type="GlyGen" id="Q5GAM9">
    <property type="glycosylation" value="2 sites"/>
</dbReference>
<dbReference type="iPTMnet" id="Q5GAM9"/>
<dbReference type="PhosphoSitePlus" id="Q5GAM9"/>
<dbReference type="PaxDb" id="10090-ENSMUSP00000075472"/>
<dbReference type="ProteomicsDB" id="260994"/>
<dbReference type="Ensembl" id="ENSMUST00000076106.4">
    <property type="protein sequence ID" value="ENSMUSP00000075472.4"/>
    <property type="gene ID" value="ENSMUSG00000059648.4"/>
</dbReference>
<dbReference type="GeneID" id="497113"/>
<dbReference type="KEGG" id="mmu:497113"/>
<dbReference type="UCSC" id="uc007tmi.2">
    <property type="organism name" value="mouse"/>
</dbReference>
<dbReference type="AGR" id="MGI:3528583"/>
<dbReference type="CTD" id="122651"/>
<dbReference type="MGI" id="MGI:3528583">
    <property type="gene designation" value="Rnase11"/>
</dbReference>
<dbReference type="VEuPathDB" id="HostDB:ENSMUSG00000059648"/>
<dbReference type="eggNOG" id="ENOG502RR9B">
    <property type="taxonomic scope" value="Eukaryota"/>
</dbReference>
<dbReference type="GeneTree" id="ENSGT00940000168252"/>
<dbReference type="HOGENOM" id="CLU_122912_0_0_1"/>
<dbReference type="InParanoid" id="Q5GAM9"/>
<dbReference type="OMA" id="KCGQNLG"/>
<dbReference type="OrthoDB" id="9619113at2759"/>
<dbReference type="PhylomeDB" id="Q5GAM9"/>
<dbReference type="TreeFam" id="TF341929"/>
<dbReference type="BioGRID-ORCS" id="497113">
    <property type="hits" value="1 hit in 77 CRISPR screens"/>
</dbReference>
<dbReference type="PRO" id="PR:Q5GAM9"/>
<dbReference type="Proteomes" id="UP000000589">
    <property type="component" value="Chromosome 14"/>
</dbReference>
<dbReference type="RNAct" id="Q5GAM9">
    <property type="molecule type" value="protein"/>
</dbReference>
<dbReference type="Bgee" id="ENSMUSG00000059648">
    <property type="expression patterns" value="Expressed in testis"/>
</dbReference>
<dbReference type="ExpressionAtlas" id="Q5GAM9">
    <property type="expression patterns" value="baseline and differential"/>
</dbReference>
<dbReference type="GO" id="GO:0005576">
    <property type="term" value="C:extracellular region"/>
    <property type="evidence" value="ECO:0007669"/>
    <property type="project" value="UniProtKB-SubCell"/>
</dbReference>
<dbReference type="GO" id="GO:0003676">
    <property type="term" value="F:nucleic acid binding"/>
    <property type="evidence" value="ECO:0007669"/>
    <property type="project" value="InterPro"/>
</dbReference>
<dbReference type="InterPro" id="IPR001427">
    <property type="entry name" value="RNaseA"/>
</dbReference>
<dbReference type="PANTHER" id="PTHR11437">
    <property type="entry name" value="RIBONUCLEASE"/>
    <property type="match status" value="1"/>
</dbReference>
<dbReference type="PANTHER" id="PTHR11437:SF22">
    <property type="entry name" value="RIBONUCLEASE 11-RELATED"/>
    <property type="match status" value="1"/>
</dbReference>
<feature type="signal peptide" evidence="1">
    <location>
        <begin position="1"/>
        <end position="15"/>
    </location>
</feature>
<feature type="chain" id="PRO_0000415815" description="Putative inactive ribonuclease 11">
    <location>
        <begin position="16"/>
        <end position="192"/>
    </location>
</feature>
<feature type="region of interest" description="Disordered" evidence="2">
    <location>
        <begin position="21"/>
        <end position="54"/>
    </location>
</feature>
<feature type="compositionally biased region" description="Polar residues" evidence="2">
    <location>
        <begin position="43"/>
        <end position="54"/>
    </location>
</feature>
<feature type="glycosylation site" description="N-linked (GlcNAc...) asparagine" evidence="1">
    <location>
        <position position="47"/>
    </location>
</feature>
<feature type="glycosylation site" description="N-linked (GlcNAc...) asparagine" evidence="1">
    <location>
        <position position="104"/>
    </location>
</feature>
<feature type="sequence conflict" description="In Ref. 3; AAI41253." evidence="3" ref="3">
    <original>M</original>
    <variation>I</variation>
    <location>
        <position position="34"/>
    </location>
</feature>
<feature type="sequence conflict" description="In Ref. 3; AAI41253." evidence="3" ref="3">
    <original>E</original>
    <variation>K</variation>
    <location>
        <position position="100"/>
    </location>
</feature>
<feature type="sequence conflict" description="In Ref. 3; AAI41253." evidence="3" ref="3">
    <original>G</original>
    <variation>A</variation>
    <location>
        <position position="103"/>
    </location>
</feature>
<sequence length="192" mass="20883">MAVFLLLLALGLLLAKPSESRMKGTTEQFSQEEMQPAAKQTLEESANSTLSDKNTGLSISKHVMSATPLTPRRLSFIIPKGNTMRDGRNCVNSLRVWRTEVDGNASCQLGNDFIHGSMDVSLRIPKATRGKCEQTPKPSSSGSLGLERTTCKVLAGHQCLRSHEHSITSLKKILTVLASNSLMSWLVSGCKL</sequence>
<proteinExistence type="evidence at transcript level"/>
<organism>
    <name type="scientific">Mus musculus</name>
    <name type="common">Mouse</name>
    <dbReference type="NCBI Taxonomy" id="10090"/>
    <lineage>
        <taxon>Eukaryota</taxon>
        <taxon>Metazoa</taxon>
        <taxon>Chordata</taxon>
        <taxon>Craniata</taxon>
        <taxon>Vertebrata</taxon>
        <taxon>Euteleostomi</taxon>
        <taxon>Mammalia</taxon>
        <taxon>Eutheria</taxon>
        <taxon>Euarchontoglires</taxon>
        <taxon>Glires</taxon>
        <taxon>Rodentia</taxon>
        <taxon>Myomorpha</taxon>
        <taxon>Muroidea</taxon>
        <taxon>Muridae</taxon>
        <taxon>Murinae</taxon>
        <taxon>Mus</taxon>
        <taxon>Mus</taxon>
    </lineage>
</organism>
<protein>
    <recommendedName>
        <fullName>Putative inactive ribonuclease 11</fullName>
        <shortName>RNase 11</shortName>
    </recommendedName>
</protein>
<name>RNS11_MOUSE</name>
<reference key="1">
    <citation type="journal article" date="2005" name="Genomics">
        <title>The ribonuclease A superfamily of mammals and birds: identifying new members and tracing evolutionary histories.</title>
        <authorList>
            <person name="Cho S."/>
            <person name="Beintema J.J."/>
            <person name="Zhang J."/>
        </authorList>
    </citation>
    <scope>NUCLEOTIDE SEQUENCE [MRNA]</scope>
</reference>
<reference key="2">
    <citation type="journal article" date="2009" name="PLoS Biol.">
        <title>Lineage-specific biology revealed by a finished genome assembly of the mouse.</title>
        <authorList>
            <person name="Church D.M."/>
            <person name="Goodstadt L."/>
            <person name="Hillier L.W."/>
            <person name="Zody M.C."/>
            <person name="Goldstein S."/>
            <person name="She X."/>
            <person name="Bult C.J."/>
            <person name="Agarwala R."/>
            <person name="Cherry J.L."/>
            <person name="DiCuccio M."/>
            <person name="Hlavina W."/>
            <person name="Kapustin Y."/>
            <person name="Meric P."/>
            <person name="Maglott D."/>
            <person name="Birtle Z."/>
            <person name="Marques A.C."/>
            <person name="Graves T."/>
            <person name="Zhou S."/>
            <person name="Teague B."/>
            <person name="Potamousis K."/>
            <person name="Churas C."/>
            <person name="Place M."/>
            <person name="Herschleb J."/>
            <person name="Runnheim R."/>
            <person name="Forrest D."/>
            <person name="Amos-Landgraf J."/>
            <person name="Schwartz D.C."/>
            <person name="Cheng Z."/>
            <person name="Lindblad-Toh K."/>
            <person name="Eichler E.E."/>
            <person name="Ponting C.P."/>
        </authorList>
    </citation>
    <scope>NUCLEOTIDE SEQUENCE [LARGE SCALE GENOMIC DNA]</scope>
    <source>
        <strain>C57BL/6J</strain>
    </source>
</reference>
<reference key="3">
    <citation type="journal article" date="2004" name="Genome Res.">
        <title>The status, quality, and expansion of the NIH full-length cDNA project: the Mammalian Gene Collection (MGC).</title>
        <authorList>
            <consortium name="The MGC Project Team"/>
        </authorList>
    </citation>
    <scope>NUCLEOTIDE SEQUENCE [LARGE SCALE MRNA]</scope>
    <source>
        <tissue>Brain</tissue>
    </source>
</reference>
<accession>Q5GAM9</accession>
<accession>B9EJ01</accession>
<evidence type="ECO:0000255" key="1"/>
<evidence type="ECO:0000256" key="2">
    <source>
        <dbReference type="SAM" id="MobiDB-lite"/>
    </source>
</evidence>
<evidence type="ECO:0000305" key="3"/>